<dbReference type="EC" id="1.1.1.23" evidence="1"/>
<dbReference type="EMBL" id="AE009441">
    <property type="protein sequence ID" value="AAL63179.1"/>
    <property type="molecule type" value="Genomic_DNA"/>
</dbReference>
<dbReference type="RefSeq" id="WP_011007651.1">
    <property type="nucleotide sequence ID" value="NC_003364.1"/>
</dbReference>
<dbReference type="SMR" id="Q8ZY17"/>
<dbReference type="FunCoup" id="Q8ZY17">
    <property type="interactions" value="209"/>
</dbReference>
<dbReference type="STRING" id="178306.PAE0988"/>
<dbReference type="EnsemblBacteria" id="AAL63179">
    <property type="protein sequence ID" value="AAL63179"/>
    <property type="gene ID" value="PAE0988"/>
</dbReference>
<dbReference type="GeneID" id="1465414"/>
<dbReference type="KEGG" id="pai:PAE0988"/>
<dbReference type="PATRIC" id="fig|178306.9.peg.734"/>
<dbReference type="eggNOG" id="arCOG04352">
    <property type="taxonomic scope" value="Archaea"/>
</dbReference>
<dbReference type="HOGENOM" id="CLU_006732_3_3_2"/>
<dbReference type="InParanoid" id="Q8ZY17"/>
<dbReference type="UniPathway" id="UPA00031">
    <property type="reaction ID" value="UER00014"/>
</dbReference>
<dbReference type="Proteomes" id="UP000002439">
    <property type="component" value="Chromosome"/>
</dbReference>
<dbReference type="GO" id="GO:0005737">
    <property type="term" value="C:cytoplasm"/>
    <property type="evidence" value="ECO:0000318"/>
    <property type="project" value="GO_Central"/>
</dbReference>
<dbReference type="GO" id="GO:0004399">
    <property type="term" value="F:histidinol dehydrogenase activity"/>
    <property type="evidence" value="ECO:0000318"/>
    <property type="project" value="GO_Central"/>
</dbReference>
<dbReference type="GO" id="GO:0046872">
    <property type="term" value="F:metal ion binding"/>
    <property type="evidence" value="ECO:0007669"/>
    <property type="project" value="UniProtKB-KW"/>
</dbReference>
<dbReference type="GO" id="GO:0051287">
    <property type="term" value="F:NAD binding"/>
    <property type="evidence" value="ECO:0007669"/>
    <property type="project" value="InterPro"/>
</dbReference>
<dbReference type="GO" id="GO:0000105">
    <property type="term" value="P:L-histidine biosynthetic process"/>
    <property type="evidence" value="ECO:0000318"/>
    <property type="project" value="GO_Central"/>
</dbReference>
<dbReference type="CDD" id="cd06572">
    <property type="entry name" value="Histidinol_dh"/>
    <property type="match status" value="1"/>
</dbReference>
<dbReference type="Gene3D" id="1.20.5.1300">
    <property type="match status" value="1"/>
</dbReference>
<dbReference type="Gene3D" id="3.40.50.1980">
    <property type="entry name" value="Nitrogenase molybdenum iron protein domain"/>
    <property type="match status" value="2"/>
</dbReference>
<dbReference type="InterPro" id="IPR016161">
    <property type="entry name" value="Ald_DH/histidinol_DH"/>
</dbReference>
<dbReference type="InterPro" id="IPR001692">
    <property type="entry name" value="Histidinol_DH_CS"/>
</dbReference>
<dbReference type="InterPro" id="IPR012131">
    <property type="entry name" value="Hstdl_DH"/>
</dbReference>
<dbReference type="NCBIfam" id="TIGR00069">
    <property type="entry name" value="hisD"/>
    <property type="match status" value="1"/>
</dbReference>
<dbReference type="PANTHER" id="PTHR21256:SF2">
    <property type="entry name" value="HISTIDINE BIOSYNTHESIS TRIFUNCTIONAL PROTEIN"/>
    <property type="match status" value="1"/>
</dbReference>
<dbReference type="PANTHER" id="PTHR21256">
    <property type="entry name" value="HISTIDINOL DEHYDROGENASE HDH"/>
    <property type="match status" value="1"/>
</dbReference>
<dbReference type="Pfam" id="PF00815">
    <property type="entry name" value="Histidinol_dh"/>
    <property type="match status" value="1"/>
</dbReference>
<dbReference type="PRINTS" id="PR00083">
    <property type="entry name" value="HOLDHDRGNASE"/>
</dbReference>
<dbReference type="SUPFAM" id="SSF53720">
    <property type="entry name" value="ALDH-like"/>
    <property type="match status" value="1"/>
</dbReference>
<dbReference type="PROSITE" id="PS00611">
    <property type="entry name" value="HISOL_DEHYDROGENASE"/>
    <property type="match status" value="1"/>
</dbReference>
<name>HISX_PYRAE</name>
<sequence>MRGFPREVLESVWKIVDDVQSGGLKAALEYSKRLDGVAPEPHLVTPRQGGDPEVVSAALAAAKSLEALYSRISPPAAVDFYGGILRQILWKPVRRAALYVPARYISTLVMLAVPARLAGVEEVYVVTPPRGVSEELLAVAKELGVKAVLALGGPHGLAYAVFHMGVDVVAGPGGLYVQAAKYILSQYVGIDGIEGPTELVIYAEGVPPEVAVRGALAQLEHGPTSFAYLLSPDGELLKKAEELYVRERTSSMGPLKVKKVGGIDEAVSFIDEIAPEHLEVWGRREVAYRVRNVGAVSVNMPSPYLDYVAGISHVLPTGGTARWRGVITPLAFMKPIGIAEAVGELTLREAARKLAEYEGFKYHGEALR</sequence>
<gene>
    <name evidence="1" type="primary">hisD</name>
    <name type="ordered locus">PAE0988</name>
</gene>
<proteinExistence type="inferred from homology"/>
<accession>Q8ZY17</accession>
<protein>
    <recommendedName>
        <fullName evidence="1">Histidinol dehydrogenase</fullName>
        <shortName evidence="1">HDH</shortName>
        <ecNumber evidence="1">1.1.1.23</ecNumber>
    </recommendedName>
</protein>
<comment type="function">
    <text evidence="1">Catalyzes the sequential NAD-dependent oxidations of L-histidinol to L-histidinaldehyde and then to L-histidine.</text>
</comment>
<comment type="catalytic activity">
    <reaction evidence="1">
        <text>L-histidinol + 2 NAD(+) + H2O = L-histidine + 2 NADH + 3 H(+)</text>
        <dbReference type="Rhea" id="RHEA:20641"/>
        <dbReference type="ChEBI" id="CHEBI:15377"/>
        <dbReference type="ChEBI" id="CHEBI:15378"/>
        <dbReference type="ChEBI" id="CHEBI:57540"/>
        <dbReference type="ChEBI" id="CHEBI:57595"/>
        <dbReference type="ChEBI" id="CHEBI:57699"/>
        <dbReference type="ChEBI" id="CHEBI:57945"/>
        <dbReference type="EC" id="1.1.1.23"/>
    </reaction>
</comment>
<comment type="cofactor">
    <cofactor evidence="1">
        <name>Zn(2+)</name>
        <dbReference type="ChEBI" id="CHEBI:29105"/>
    </cofactor>
    <text evidence="1">Binds 1 zinc ion per subunit.</text>
</comment>
<comment type="pathway">
    <text evidence="1">Amino-acid biosynthesis; L-histidine biosynthesis; L-histidine from 5-phospho-alpha-D-ribose 1-diphosphate: step 9/9.</text>
</comment>
<comment type="similarity">
    <text evidence="1">Belongs to the histidinol dehydrogenase family.</text>
</comment>
<reference key="1">
    <citation type="journal article" date="2002" name="Proc. Natl. Acad. Sci. U.S.A.">
        <title>Genome sequence of the hyperthermophilic crenarchaeon Pyrobaculum aerophilum.</title>
        <authorList>
            <person name="Fitz-Gibbon S.T."/>
            <person name="Ladner H."/>
            <person name="Kim U.-J."/>
            <person name="Stetter K.O."/>
            <person name="Simon M.I."/>
            <person name="Miller J.H."/>
        </authorList>
    </citation>
    <scope>NUCLEOTIDE SEQUENCE [LARGE SCALE GENOMIC DNA]</scope>
    <source>
        <strain>ATCC 51768 / DSM 7523 / JCM 9630 / CIP 104966 / NBRC 100827 / IM2</strain>
    </source>
</reference>
<keyword id="KW-0028">Amino-acid biosynthesis</keyword>
<keyword id="KW-0368">Histidine biosynthesis</keyword>
<keyword id="KW-0479">Metal-binding</keyword>
<keyword id="KW-0520">NAD</keyword>
<keyword id="KW-0560">Oxidoreductase</keyword>
<keyword id="KW-1185">Reference proteome</keyword>
<keyword id="KW-0862">Zinc</keyword>
<feature type="chain" id="PRO_0000135902" description="Histidinol dehydrogenase">
    <location>
        <begin position="1"/>
        <end position="368"/>
    </location>
</feature>
<feature type="active site" description="Proton acceptor" evidence="1">
    <location>
        <position position="276"/>
    </location>
</feature>
<feature type="active site" description="Proton acceptor" evidence="1">
    <location>
        <position position="277"/>
    </location>
</feature>
<feature type="binding site" evidence="1">
    <location>
        <position position="197"/>
    </location>
    <ligand>
        <name>substrate</name>
    </ligand>
</feature>
<feature type="binding site" evidence="1">
    <location>
        <position position="218"/>
    </location>
    <ligand>
        <name>substrate</name>
    </ligand>
</feature>
<feature type="binding site" evidence="1">
    <location>
        <position position="218"/>
    </location>
    <ligand>
        <name>Zn(2+)</name>
        <dbReference type="ChEBI" id="CHEBI:29105"/>
    </ligand>
</feature>
<feature type="binding site" evidence="1">
    <location>
        <position position="221"/>
    </location>
    <ligand>
        <name>substrate</name>
    </ligand>
</feature>
<feature type="binding site" evidence="1">
    <location>
        <position position="221"/>
    </location>
    <ligand>
        <name>Zn(2+)</name>
        <dbReference type="ChEBI" id="CHEBI:29105"/>
    </ligand>
</feature>
<feature type="binding site" evidence="1">
    <location>
        <position position="277"/>
    </location>
    <ligand>
        <name>substrate</name>
    </ligand>
</feature>
<feature type="binding site" evidence="1">
    <location>
        <position position="306"/>
    </location>
    <ligand>
        <name>substrate</name>
    </ligand>
</feature>
<feature type="binding site" evidence="1">
    <location>
        <position position="306"/>
    </location>
    <ligand>
        <name>Zn(2+)</name>
        <dbReference type="ChEBI" id="CHEBI:29105"/>
    </ligand>
</feature>
<feature type="binding site" evidence="1">
    <location>
        <position position="358"/>
    </location>
    <ligand>
        <name>substrate</name>
    </ligand>
</feature>
<feature type="binding site" evidence="1">
    <location>
        <position position="363"/>
    </location>
    <ligand>
        <name>substrate</name>
    </ligand>
</feature>
<feature type="binding site" evidence="1">
    <location>
        <position position="363"/>
    </location>
    <ligand>
        <name>Zn(2+)</name>
        <dbReference type="ChEBI" id="CHEBI:29105"/>
    </ligand>
</feature>
<evidence type="ECO:0000255" key="1">
    <source>
        <dbReference type="HAMAP-Rule" id="MF_01024"/>
    </source>
</evidence>
<organism>
    <name type="scientific">Pyrobaculum aerophilum (strain ATCC 51768 / DSM 7523 / JCM 9630 / CIP 104966 / NBRC 100827 / IM2)</name>
    <dbReference type="NCBI Taxonomy" id="178306"/>
    <lineage>
        <taxon>Archaea</taxon>
        <taxon>Thermoproteota</taxon>
        <taxon>Thermoprotei</taxon>
        <taxon>Thermoproteales</taxon>
        <taxon>Thermoproteaceae</taxon>
        <taxon>Pyrobaculum</taxon>
    </lineage>
</organism>